<reference key="1">
    <citation type="journal article" date="2003" name="J. Hum. Genet.">
        <title>Isolation and identification of a novel cDNA that encodes human yrdC protein.</title>
        <authorList>
            <person name="Chen J."/>
            <person name="Ji C."/>
            <person name="Gu S."/>
            <person name="Zhao E."/>
            <person name="Dai J."/>
            <person name="Huang L."/>
            <person name="Qian J."/>
            <person name="Ying K."/>
            <person name="Xie Y."/>
            <person name="Mao Y."/>
        </authorList>
    </citation>
    <scope>NUCLEOTIDE SEQUENCE [MRNA]</scope>
    <scope>TISSUE SPECIFICITY</scope>
</reference>
<reference key="2">
    <citation type="journal article" date="2006" name="Nature">
        <title>The DNA sequence and biological annotation of human chromosome 1.</title>
        <authorList>
            <person name="Gregory S.G."/>
            <person name="Barlow K.F."/>
            <person name="McLay K.E."/>
            <person name="Kaul R."/>
            <person name="Swarbreck D."/>
            <person name="Dunham A."/>
            <person name="Scott C.E."/>
            <person name="Howe K.L."/>
            <person name="Woodfine K."/>
            <person name="Spencer C.C.A."/>
            <person name="Jones M.C."/>
            <person name="Gillson C."/>
            <person name="Searle S."/>
            <person name="Zhou Y."/>
            <person name="Kokocinski F."/>
            <person name="McDonald L."/>
            <person name="Evans R."/>
            <person name="Phillips K."/>
            <person name="Atkinson A."/>
            <person name="Cooper R."/>
            <person name="Jones C."/>
            <person name="Hall R.E."/>
            <person name="Andrews T.D."/>
            <person name="Lloyd C."/>
            <person name="Ainscough R."/>
            <person name="Almeida J.P."/>
            <person name="Ambrose K.D."/>
            <person name="Anderson F."/>
            <person name="Andrew R.W."/>
            <person name="Ashwell R.I.S."/>
            <person name="Aubin K."/>
            <person name="Babbage A.K."/>
            <person name="Bagguley C.L."/>
            <person name="Bailey J."/>
            <person name="Beasley H."/>
            <person name="Bethel G."/>
            <person name="Bird C.P."/>
            <person name="Bray-Allen S."/>
            <person name="Brown J.Y."/>
            <person name="Brown A.J."/>
            <person name="Buckley D."/>
            <person name="Burton J."/>
            <person name="Bye J."/>
            <person name="Carder C."/>
            <person name="Chapman J.C."/>
            <person name="Clark S.Y."/>
            <person name="Clarke G."/>
            <person name="Clee C."/>
            <person name="Cobley V."/>
            <person name="Collier R.E."/>
            <person name="Corby N."/>
            <person name="Coville G.J."/>
            <person name="Davies J."/>
            <person name="Deadman R."/>
            <person name="Dunn M."/>
            <person name="Earthrowl M."/>
            <person name="Ellington A.G."/>
            <person name="Errington H."/>
            <person name="Frankish A."/>
            <person name="Frankland J."/>
            <person name="French L."/>
            <person name="Garner P."/>
            <person name="Garnett J."/>
            <person name="Gay L."/>
            <person name="Ghori M.R.J."/>
            <person name="Gibson R."/>
            <person name="Gilby L.M."/>
            <person name="Gillett W."/>
            <person name="Glithero R.J."/>
            <person name="Grafham D.V."/>
            <person name="Griffiths C."/>
            <person name="Griffiths-Jones S."/>
            <person name="Grocock R."/>
            <person name="Hammond S."/>
            <person name="Harrison E.S.I."/>
            <person name="Hart E."/>
            <person name="Haugen E."/>
            <person name="Heath P.D."/>
            <person name="Holmes S."/>
            <person name="Holt K."/>
            <person name="Howden P.J."/>
            <person name="Hunt A.R."/>
            <person name="Hunt S.E."/>
            <person name="Hunter G."/>
            <person name="Isherwood J."/>
            <person name="James R."/>
            <person name="Johnson C."/>
            <person name="Johnson D."/>
            <person name="Joy A."/>
            <person name="Kay M."/>
            <person name="Kershaw J.K."/>
            <person name="Kibukawa M."/>
            <person name="Kimberley A.M."/>
            <person name="King A."/>
            <person name="Knights A.J."/>
            <person name="Lad H."/>
            <person name="Laird G."/>
            <person name="Lawlor S."/>
            <person name="Leongamornlert D.A."/>
            <person name="Lloyd D.M."/>
            <person name="Loveland J."/>
            <person name="Lovell J."/>
            <person name="Lush M.J."/>
            <person name="Lyne R."/>
            <person name="Martin S."/>
            <person name="Mashreghi-Mohammadi M."/>
            <person name="Matthews L."/>
            <person name="Matthews N.S.W."/>
            <person name="McLaren S."/>
            <person name="Milne S."/>
            <person name="Mistry S."/>
            <person name="Moore M.J.F."/>
            <person name="Nickerson T."/>
            <person name="O'Dell C.N."/>
            <person name="Oliver K."/>
            <person name="Palmeiri A."/>
            <person name="Palmer S.A."/>
            <person name="Parker A."/>
            <person name="Patel D."/>
            <person name="Pearce A.V."/>
            <person name="Peck A.I."/>
            <person name="Pelan S."/>
            <person name="Phelps K."/>
            <person name="Phillimore B.J."/>
            <person name="Plumb R."/>
            <person name="Rajan J."/>
            <person name="Raymond C."/>
            <person name="Rouse G."/>
            <person name="Saenphimmachak C."/>
            <person name="Sehra H.K."/>
            <person name="Sheridan E."/>
            <person name="Shownkeen R."/>
            <person name="Sims S."/>
            <person name="Skuce C.D."/>
            <person name="Smith M."/>
            <person name="Steward C."/>
            <person name="Subramanian S."/>
            <person name="Sycamore N."/>
            <person name="Tracey A."/>
            <person name="Tromans A."/>
            <person name="Van Helmond Z."/>
            <person name="Wall M."/>
            <person name="Wallis J.M."/>
            <person name="White S."/>
            <person name="Whitehead S.L."/>
            <person name="Wilkinson J.E."/>
            <person name="Willey D.L."/>
            <person name="Williams H."/>
            <person name="Wilming L."/>
            <person name="Wray P.W."/>
            <person name="Wu Z."/>
            <person name="Coulson A."/>
            <person name="Vaudin M."/>
            <person name="Sulston J.E."/>
            <person name="Durbin R.M."/>
            <person name="Hubbard T."/>
            <person name="Wooster R."/>
            <person name="Dunham I."/>
            <person name="Carter N.P."/>
            <person name="McVean G."/>
            <person name="Ross M.T."/>
            <person name="Harrow J."/>
            <person name="Olson M.V."/>
            <person name="Beck S."/>
            <person name="Rogers J."/>
            <person name="Bentley D.R."/>
        </authorList>
    </citation>
    <scope>NUCLEOTIDE SEQUENCE [LARGE SCALE GENOMIC DNA]</scope>
</reference>
<reference key="3">
    <citation type="submission" date="2005-09" db="EMBL/GenBank/DDBJ databases">
        <authorList>
            <person name="Mural R.J."/>
            <person name="Istrail S."/>
            <person name="Sutton G.G."/>
            <person name="Florea L."/>
            <person name="Halpern A.L."/>
            <person name="Mobarry C.M."/>
            <person name="Lippert R."/>
            <person name="Walenz B."/>
            <person name="Shatkay H."/>
            <person name="Dew I."/>
            <person name="Miller J.R."/>
            <person name="Flanigan M.J."/>
            <person name="Edwards N.J."/>
            <person name="Bolanos R."/>
            <person name="Fasulo D."/>
            <person name="Halldorsson B.V."/>
            <person name="Hannenhalli S."/>
            <person name="Turner R."/>
            <person name="Yooseph S."/>
            <person name="Lu F."/>
            <person name="Nusskern D.R."/>
            <person name="Shue B.C."/>
            <person name="Zheng X.H."/>
            <person name="Zhong F."/>
            <person name="Delcher A.L."/>
            <person name="Huson D.H."/>
            <person name="Kravitz S.A."/>
            <person name="Mouchard L."/>
            <person name="Reinert K."/>
            <person name="Remington K.A."/>
            <person name="Clark A.G."/>
            <person name="Waterman M.S."/>
            <person name="Eichler E.E."/>
            <person name="Adams M.D."/>
            <person name="Hunkapiller M.W."/>
            <person name="Myers E.W."/>
            <person name="Venter J.C."/>
        </authorList>
    </citation>
    <scope>NUCLEOTIDE SEQUENCE [LARGE SCALE GENOMIC DNA]</scope>
</reference>
<reference key="4">
    <citation type="journal article" date="2004" name="Genome Res.">
        <title>The status, quality, and expansion of the NIH full-length cDNA project: the Mammalian Gene Collection (MGC).</title>
        <authorList>
            <consortium name="The MGC Project Team"/>
        </authorList>
    </citation>
    <scope>NUCLEOTIDE SEQUENCE [LARGE SCALE MRNA]</scope>
    <source>
        <tissue>Lymph</tissue>
        <tissue>Placenta</tissue>
        <tissue>Skin</tissue>
    </source>
</reference>
<reference key="5">
    <citation type="journal article" date="2005" name="Mol. Cell. Biol.">
        <title>IRIP, a new ischemia/reperfusion-inducible protein that participates in the regulation of transporter activity.</title>
        <authorList>
            <person name="Jiang W."/>
            <person name="Prokopenko O."/>
            <person name="Wong L."/>
            <person name="Inouye M."/>
            <person name="Mirochnitchenko O."/>
        </authorList>
    </citation>
    <scope>NUCLEOTIDE SEQUENCE [MRNA] OF 3-279</scope>
</reference>
<reference key="6">
    <citation type="submission" date="2000-03" db="EMBL/GenBank/DDBJ databases">
        <title>Cloning and characterization of DRIP3, a new protein that specifically interacts with the D1 dopamine receptor.</title>
        <authorList>
            <person name="Lafuente M.J."/>
            <person name="Nasir J."/>
        </authorList>
    </citation>
    <scope>NUCLEOTIDE SEQUENCE [MRNA] OF 57-279</scope>
</reference>
<reference key="7">
    <citation type="journal article" date="2004" name="Nat. Genet.">
        <title>Complete sequencing and characterization of 21,243 full-length human cDNAs.</title>
        <authorList>
            <person name="Ota T."/>
            <person name="Suzuki Y."/>
            <person name="Nishikawa T."/>
            <person name="Otsuki T."/>
            <person name="Sugiyama T."/>
            <person name="Irie R."/>
            <person name="Wakamatsu A."/>
            <person name="Hayashi K."/>
            <person name="Sato H."/>
            <person name="Nagai K."/>
            <person name="Kimura K."/>
            <person name="Makita H."/>
            <person name="Sekine M."/>
            <person name="Obayashi M."/>
            <person name="Nishi T."/>
            <person name="Shibahara T."/>
            <person name="Tanaka T."/>
            <person name="Ishii S."/>
            <person name="Yamamoto J."/>
            <person name="Saito K."/>
            <person name="Kawai Y."/>
            <person name="Isono Y."/>
            <person name="Nakamura Y."/>
            <person name="Nagahari K."/>
            <person name="Murakami K."/>
            <person name="Yasuda T."/>
            <person name="Iwayanagi T."/>
            <person name="Wagatsuma M."/>
            <person name="Shiratori A."/>
            <person name="Sudo H."/>
            <person name="Hosoiri T."/>
            <person name="Kaku Y."/>
            <person name="Kodaira H."/>
            <person name="Kondo H."/>
            <person name="Sugawara M."/>
            <person name="Takahashi M."/>
            <person name="Kanda K."/>
            <person name="Yokoi T."/>
            <person name="Furuya T."/>
            <person name="Kikkawa E."/>
            <person name="Omura Y."/>
            <person name="Abe K."/>
            <person name="Kamihara K."/>
            <person name="Katsuta N."/>
            <person name="Sato K."/>
            <person name="Tanikawa M."/>
            <person name="Yamazaki M."/>
            <person name="Ninomiya K."/>
            <person name="Ishibashi T."/>
            <person name="Yamashita H."/>
            <person name="Murakawa K."/>
            <person name="Fujimori K."/>
            <person name="Tanai H."/>
            <person name="Kimata M."/>
            <person name="Watanabe M."/>
            <person name="Hiraoka S."/>
            <person name="Chiba Y."/>
            <person name="Ishida S."/>
            <person name="Ono Y."/>
            <person name="Takiguchi S."/>
            <person name="Watanabe S."/>
            <person name="Yosida M."/>
            <person name="Hotuta T."/>
            <person name="Kusano J."/>
            <person name="Kanehori K."/>
            <person name="Takahashi-Fujii A."/>
            <person name="Hara H."/>
            <person name="Tanase T.-O."/>
            <person name="Nomura Y."/>
            <person name="Togiya S."/>
            <person name="Komai F."/>
            <person name="Hara R."/>
            <person name="Takeuchi K."/>
            <person name="Arita M."/>
            <person name="Imose N."/>
            <person name="Musashino K."/>
            <person name="Yuuki H."/>
            <person name="Oshima A."/>
            <person name="Sasaki N."/>
            <person name="Aotsuka S."/>
            <person name="Yoshikawa Y."/>
            <person name="Matsunawa H."/>
            <person name="Ichihara T."/>
            <person name="Shiohata N."/>
            <person name="Sano S."/>
            <person name="Moriya S."/>
            <person name="Momiyama H."/>
            <person name="Satoh N."/>
            <person name="Takami S."/>
            <person name="Terashima Y."/>
            <person name="Suzuki O."/>
            <person name="Nakagawa S."/>
            <person name="Senoh A."/>
            <person name="Mizoguchi H."/>
            <person name="Goto Y."/>
            <person name="Shimizu F."/>
            <person name="Wakebe H."/>
            <person name="Hishigaki H."/>
            <person name="Watanabe T."/>
            <person name="Sugiyama A."/>
            <person name="Takemoto M."/>
            <person name="Kawakami B."/>
            <person name="Yamazaki M."/>
            <person name="Watanabe K."/>
            <person name="Kumagai A."/>
            <person name="Itakura S."/>
            <person name="Fukuzumi Y."/>
            <person name="Fujimori Y."/>
            <person name="Komiyama M."/>
            <person name="Tashiro H."/>
            <person name="Tanigami A."/>
            <person name="Fujiwara T."/>
            <person name="Ono T."/>
            <person name="Yamada K."/>
            <person name="Fujii Y."/>
            <person name="Ozaki K."/>
            <person name="Hirao M."/>
            <person name="Ohmori Y."/>
            <person name="Kawabata A."/>
            <person name="Hikiji T."/>
            <person name="Kobatake N."/>
            <person name="Inagaki H."/>
            <person name="Ikema Y."/>
            <person name="Okamoto S."/>
            <person name="Okitani R."/>
            <person name="Kawakami T."/>
            <person name="Noguchi S."/>
            <person name="Itoh T."/>
            <person name="Shigeta K."/>
            <person name="Senba T."/>
            <person name="Matsumura K."/>
            <person name="Nakajima Y."/>
            <person name="Mizuno T."/>
            <person name="Morinaga M."/>
            <person name="Sasaki M."/>
            <person name="Togashi T."/>
            <person name="Oyama M."/>
            <person name="Hata H."/>
            <person name="Watanabe M."/>
            <person name="Komatsu T."/>
            <person name="Mizushima-Sugano J."/>
            <person name="Satoh T."/>
            <person name="Shirai Y."/>
            <person name="Takahashi Y."/>
            <person name="Nakagawa K."/>
            <person name="Okumura K."/>
            <person name="Nagase T."/>
            <person name="Nomura N."/>
            <person name="Kikuchi H."/>
            <person name="Masuho Y."/>
            <person name="Yamashita R."/>
            <person name="Nakai K."/>
            <person name="Yada T."/>
            <person name="Nakamura Y."/>
            <person name="Ohara O."/>
            <person name="Isogai T."/>
            <person name="Sugano S."/>
        </authorList>
    </citation>
    <scope>NUCLEOTIDE SEQUENCE [LARGE SCALE MRNA] OF 129-279</scope>
    <source>
        <tissue>Small intestine</tissue>
    </source>
</reference>
<reference key="8">
    <citation type="journal article" date="2006" name="Cell">
        <title>Global, in vivo, and site-specific phosphorylation dynamics in signaling networks.</title>
        <authorList>
            <person name="Olsen J.V."/>
            <person name="Blagoev B."/>
            <person name="Gnad F."/>
            <person name="Macek B."/>
            <person name="Kumar C."/>
            <person name="Mortensen P."/>
            <person name="Mann M."/>
        </authorList>
    </citation>
    <scope>IDENTIFICATION BY MASS SPECTROMETRY [LARGE SCALE ANALYSIS]</scope>
    <source>
        <tissue>Cervix carcinoma</tissue>
    </source>
</reference>
<reference key="9">
    <citation type="journal article" date="2006" name="Nat. Biotechnol.">
        <title>A probability-based approach for high-throughput protein phosphorylation analysis and site localization.</title>
        <authorList>
            <person name="Beausoleil S.A."/>
            <person name="Villen J."/>
            <person name="Gerber S.A."/>
            <person name="Rush J."/>
            <person name="Gygi S.P."/>
        </authorList>
    </citation>
    <scope>PHOSPHORYLATION [LARGE SCALE ANALYSIS] AT SER-60</scope>
    <scope>IDENTIFICATION BY MASS SPECTROMETRY [LARGE SCALE ANALYSIS]</scope>
    <source>
        <tissue>Cervix carcinoma</tissue>
    </source>
</reference>
<reference key="10">
    <citation type="journal article" date="2007" name="J. Proteome Res.">
        <title>Improved titanium dioxide enrichment of phosphopeptides from HeLa cells and high confident phosphopeptide identification by cross-validation of MS/MS and MS/MS/MS spectra.</title>
        <authorList>
            <person name="Yu L.R."/>
            <person name="Zhu Z."/>
            <person name="Chan K.C."/>
            <person name="Issaq H.J."/>
            <person name="Dimitrov D.S."/>
            <person name="Veenstra T.D."/>
        </authorList>
    </citation>
    <scope>IDENTIFICATION BY MASS SPECTROMETRY [LARGE SCALE ANALYSIS]</scope>
    <source>
        <tissue>Cervix carcinoma</tissue>
    </source>
</reference>
<reference key="11">
    <citation type="journal article" date="2008" name="Mol. Cell">
        <title>Kinase-selective enrichment enables quantitative phosphoproteomics of the kinome across the cell cycle.</title>
        <authorList>
            <person name="Daub H."/>
            <person name="Olsen J.V."/>
            <person name="Bairlein M."/>
            <person name="Gnad F."/>
            <person name="Oppermann F.S."/>
            <person name="Korner R."/>
            <person name="Greff Z."/>
            <person name="Keri G."/>
            <person name="Stemmann O."/>
            <person name="Mann M."/>
        </authorList>
    </citation>
    <scope>PHOSPHORYLATION [LARGE SCALE ANALYSIS] AT SER-60</scope>
    <scope>IDENTIFICATION BY MASS SPECTROMETRY [LARGE SCALE ANALYSIS]</scope>
    <source>
        <tissue>Cervix carcinoma</tissue>
    </source>
</reference>
<reference key="12">
    <citation type="journal article" date="2008" name="Proc. Natl. Acad. Sci. U.S.A.">
        <title>A quantitative atlas of mitotic phosphorylation.</title>
        <authorList>
            <person name="Dephoure N."/>
            <person name="Zhou C."/>
            <person name="Villen J."/>
            <person name="Beausoleil S.A."/>
            <person name="Bakalarski C.E."/>
            <person name="Elledge S.J."/>
            <person name="Gygi S.P."/>
        </authorList>
    </citation>
    <scope>PHOSPHORYLATION [LARGE SCALE ANALYSIS] AT SER-60</scope>
    <scope>IDENTIFICATION BY MASS SPECTROMETRY [LARGE SCALE ANALYSIS]</scope>
    <source>
        <tissue>Cervix carcinoma</tissue>
    </source>
</reference>
<reference key="13">
    <citation type="journal article" date="2009" name="Anal. Chem.">
        <title>Lys-N and trypsin cover complementary parts of the phosphoproteome in a refined SCX-based approach.</title>
        <authorList>
            <person name="Gauci S."/>
            <person name="Helbig A.O."/>
            <person name="Slijper M."/>
            <person name="Krijgsveld J."/>
            <person name="Heck A.J."/>
            <person name="Mohammed S."/>
        </authorList>
    </citation>
    <scope>IDENTIFICATION BY MASS SPECTROMETRY [LARGE SCALE ANALYSIS]</scope>
</reference>
<reference key="14">
    <citation type="journal article" date="2009" name="Sci. Signal.">
        <title>Quantitative phosphoproteomic analysis of T cell receptor signaling reveals system-wide modulation of protein-protein interactions.</title>
        <authorList>
            <person name="Mayya V."/>
            <person name="Lundgren D.H."/>
            <person name="Hwang S.-I."/>
            <person name="Rezaul K."/>
            <person name="Wu L."/>
            <person name="Eng J.K."/>
            <person name="Rodionov V."/>
            <person name="Han D.K."/>
        </authorList>
    </citation>
    <scope>IDENTIFICATION BY MASS SPECTROMETRY [LARGE SCALE ANALYSIS]</scope>
    <source>
        <tissue>Leukemic T-cell</tissue>
    </source>
</reference>
<reference key="15">
    <citation type="journal article" date="2010" name="Sci. Signal.">
        <title>Quantitative phosphoproteomics reveals widespread full phosphorylation site occupancy during mitosis.</title>
        <authorList>
            <person name="Olsen J.V."/>
            <person name="Vermeulen M."/>
            <person name="Santamaria A."/>
            <person name="Kumar C."/>
            <person name="Miller M.L."/>
            <person name="Jensen L.J."/>
            <person name="Gnad F."/>
            <person name="Cox J."/>
            <person name="Jensen T.S."/>
            <person name="Nigg E.A."/>
            <person name="Brunak S."/>
            <person name="Mann M."/>
        </authorList>
    </citation>
    <scope>PHOSPHORYLATION [LARGE SCALE ANALYSIS] AT SER-60</scope>
    <scope>IDENTIFICATION BY MASS SPECTROMETRY [LARGE SCALE ANALYSIS]</scope>
    <source>
        <tissue>Cervix carcinoma</tissue>
    </source>
</reference>
<reference key="16">
    <citation type="journal article" date="2011" name="BMC Syst. Biol.">
        <title>Initial characterization of the human central proteome.</title>
        <authorList>
            <person name="Burkard T.R."/>
            <person name="Planyavsky M."/>
            <person name="Kaupe I."/>
            <person name="Breitwieser F.P."/>
            <person name="Buerckstuemmer T."/>
            <person name="Bennett K.L."/>
            <person name="Superti-Furga G."/>
            <person name="Colinge J."/>
        </authorList>
    </citation>
    <scope>IDENTIFICATION BY MASS SPECTROMETRY [LARGE SCALE ANALYSIS]</scope>
</reference>
<reference key="17">
    <citation type="journal article" date="2011" name="Sci. Signal.">
        <title>System-wide temporal characterization of the proteome and phosphoproteome of human embryonic stem cell differentiation.</title>
        <authorList>
            <person name="Rigbolt K.T."/>
            <person name="Prokhorova T.A."/>
            <person name="Akimov V."/>
            <person name="Henningsen J."/>
            <person name="Johansen P.T."/>
            <person name="Kratchmarova I."/>
            <person name="Kassem M."/>
            <person name="Mann M."/>
            <person name="Olsen J.V."/>
            <person name="Blagoev B."/>
        </authorList>
    </citation>
    <scope>IDENTIFICATION BY MASS SPECTROMETRY [LARGE SCALE ANALYSIS]</scope>
</reference>
<reference key="18">
    <citation type="journal article" date="2013" name="J. Proteome Res.">
        <title>Toward a comprehensive characterization of a human cancer cell phosphoproteome.</title>
        <authorList>
            <person name="Zhou H."/>
            <person name="Di Palma S."/>
            <person name="Preisinger C."/>
            <person name="Peng M."/>
            <person name="Polat A.N."/>
            <person name="Heck A.J."/>
            <person name="Mohammed S."/>
        </authorList>
    </citation>
    <scope>PHOSPHORYLATION [LARGE SCALE ANALYSIS] AT SER-60</scope>
    <scope>IDENTIFICATION BY MASS SPECTROMETRY [LARGE SCALE ANALYSIS]</scope>
    <source>
        <tissue>Cervix carcinoma</tissue>
        <tissue>Erythroleukemia</tissue>
    </source>
</reference>
<reference key="19">
    <citation type="journal article" date="2014" name="J. Proteomics">
        <title>An enzyme assisted RP-RPLC approach for in-depth analysis of human liver phosphoproteome.</title>
        <authorList>
            <person name="Bian Y."/>
            <person name="Song C."/>
            <person name="Cheng K."/>
            <person name="Dong M."/>
            <person name="Wang F."/>
            <person name="Huang J."/>
            <person name="Sun D."/>
            <person name="Wang L."/>
            <person name="Ye M."/>
            <person name="Zou H."/>
        </authorList>
    </citation>
    <scope>IDENTIFICATION BY MASS SPECTROMETRY [LARGE SCALE ANALYSIS]</scope>
    <source>
        <tissue>Liver</tissue>
    </source>
</reference>
<reference key="20">
    <citation type="journal article" date="2018" name="Nat. Commun.">
        <title>CO2-sensitive tRNA modification associated with human mitochondrial disease.</title>
        <authorList>
            <person name="Lin H."/>
            <person name="Miyauchi K."/>
            <person name="Harada T."/>
            <person name="Okita R."/>
            <person name="Takeshita E."/>
            <person name="Komaki H."/>
            <person name="Fujioka K."/>
            <person name="Yagasaki H."/>
            <person name="Goto Y.I."/>
            <person name="Yanaka K."/>
            <person name="Nakagawa S."/>
            <person name="Sakaguchi Y."/>
            <person name="Suzuki T."/>
        </authorList>
    </citation>
    <scope>FUNCTION</scope>
    <scope>CATALYTIC ACTIVITY</scope>
    <scope>SUBCELLULAR LOCATION</scope>
    <scope>DOMAIN</scope>
    <scope>MUTAGENESIS OF 15-ALA--SER-17 AND SER-17</scope>
</reference>
<reference key="21">
    <citation type="journal article" date="2019" name="Nat. Commun.">
        <title>Defects in t6A tRNA modification due to GON7 and YRDC mutations lead to Galloway-Mowat syndrome.</title>
        <authorList>
            <person name="Arrondel C."/>
            <person name="Missoury S."/>
            <person name="Snoek R."/>
            <person name="Patat J."/>
            <person name="Menara G."/>
            <person name="Collinet B."/>
            <person name="Liger D."/>
            <person name="Durand D."/>
            <person name="Gribouval O."/>
            <person name="Boyer O."/>
            <person name="Buscara L."/>
            <person name="Martin G."/>
            <person name="Machuca E."/>
            <person name="Nevo F."/>
            <person name="Lescop E."/>
            <person name="Braun D.A."/>
            <person name="Boschat A.C."/>
            <person name="Sanquer S."/>
            <person name="Guerrera I.C."/>
            <person name="Revy P."/>
            <person name="Parisot M."/>
            <person name="Masson C."/>
            <person name="Boddaert N."/>
            <person name="Charbit M."/>
            <person name="Decramer S."/>
            <person name="Novo R."/>
            <person name="Macher M.A."/>
            <person name="Ranchin B."/>
            <person name="Bacchetta J."/>
            <person name="Laurent A."/>
            <person name="Collardeau-Frachon S."/>
            <person name="van Eerde A.M."/>
            <person name="Hildebrandt F."/>
            <person name="Magen D."/>
            <person name="Antignac C."/>
            <person name="van Tilbeurgh H."/>
            <person name="Mollet G."/>
        </authorList>
    </citation>
    <scope>FUNCTION</scope>
    <scope>INVOLVEMENT IN GAMOS10</scope>
    <scope>VARIANTS GAMOS10 VAL-84 AND LEU-265 DEL</scope>
    <scope>CHARACTERIZATION OF VARIANTS GAMOS10 VAL-84 AND LEU-265 DEL</scope>
</reference>
<reference key="22">
    <citation type="journal article" date="2021" name="Hum. Genet.">
        <title>Biallelic variants in YRDC cause a developmental disorder with progeroid features.</title>
        <authorList>
            <person name="Schmidt J."/>
            <person name="Goergens J."/>
            <person name="Pochechueva T."/>
            <person name="Kotter A."/>
            <person name="Schwenzer N."/>
            <person name="Sitte M."/>
            <person name="Werner G."/>
            <person name="Altmueller J."/>
            <person name="Thiele H."/>
            <person name="Nuernberg P."/>
            <person name="Isensee J."/>
            <person name="Li Y."/>
            <person name="Mueller C."/>
            <person name="Leube B."/>
            <person name="Reinhardt H.C."/>
            <person name="Hucho T."/>
            <person name="Salinas G."/>
            <person name="Helm M."/>
            <person name="Jachimowicz R.D."/>
            <person name="Wieczorek D."/>
            <person name="Kohl T."/>
            <person name="Lehnart S.E."/>
            <person name="Yigit G."/>
            <person name="Wollnik B."/>
        </authorList>
    </citation>
    <scope>VARIANT GAMOS10 THR-221</scope>
    <scope>CHARACTERIZATION OF VARIANT GAMOS10 THR-221</scope>
    <scope>FUNCTION</scope>
</reference>
<name>YRDC_HUMAN</name>
<proteinExistence type="evidence at protein level"/>
<keyword id="KW-1003">Cell membrane</keyword>
<keyword id="KW-0963">Cytoplasm</keyword>
<keyword id="KW-0225">Disease variant</keyword>
<keyword id="KW-0887">Epilepsy</keyword>
<keyword id="KW-0991">Intellectual disability</keyword>
<keyword id="KW-0472">Membrane</keyword>
<keyword id="KW-0496">Mitochondrion</keyword>
<keyword id="KW-0597">Phosphoprotein</keyword>
<keyword id="KW-1267">Proteomics identification</keyword>
<keyword id="KW-1185">Reference proteome</keyword>
<keyword id="KW-0808">Transferase</keyword>
<keyword id="KW-0809">Transit peptide</keyword>
<comment type="function">
    <text evidence="1 6 7 8">Cytoplasmic and mitochondrial threonylcarbamoyl-AMP synthase required for the formation of a threonylcarbamoyl group on adenosine at position 37 (t(6)A37) in tRNAs that read codons beginning with adenine (PubMed:29760464, PubMed:31481669, PubMed:34545459). Catalyzes the conversion of L-threonine, HCO(3)(-)/CO(2) and ATP to give threonylcarbamoyl-AMP (TC-AMP) as the acyladenylate intermediate, with the release of diphosphate (PubMed:29760464). Participates in t(6)A37 formation in cytoplasmic and mitochondrial tRNAs (PubMed:29760464). May regulate the activity of some transporters (By similarity).</text>
</comment>
<comment type="catalytic activity">
    <reaction evidence="13">
        <text>L-threonine + hydrogencarbonate + ATP = L-threonylcarbamoyladenylate + diphosphate + H2O</text>
        <dbReference type="Rhea" id="RHEA:36407"/>
        <dbReference type="ChEBI" id="CHEBI:15377"/>
        <dbReference type="ChEBI" id="CHEBI:17544"/>
        <dbReference type="ChEBI" id="CHEBI:30616"/>
        <dbReference type="ChEBI" id="CHEBI:33019"/>
        <dbReference type="ChEBI" id="CHEBI:57926"/>
        <dbReference type="ChEBI" id="CHEBI:73682"/>
        <dbReference type="EC" id="2.7.7.87"/>
    </reaction>
</comment>
<comment type="subunit">
    <text evidence="1">Interacts with RSC1A1.</text>
</comment>
<comment type="interaction">
    <interactant intactId="EBI-21659356">
        <id>Q86U90</id>
    </interactant>
    <interactant intactId="EBI-10988864">
        <id>P46379-2</id>
        <label>BAG6</label>
    </interactant>
    <organismsDiffer>false</organismsDiffer>
    <experiments>3</experiments>
</comment>
<comment type="interaction">
    <interactant intactId="EBI-21659356">
        <id>Q86U90</id>
    </interactant>
    <interactant intactId="EBI-395638">
        <id>O14645</id>
        <label>DNALI1</label>
    </interactant>
    <organismsDiffer>false</organismsDiffer>
    <experiments>3</experiments>
</comment>
<comment type="interaction">
    <interactant intactId="EBI-21659356">
        <id>Q86U90</id>
    </interactant>
    <interactant intactId="EBI-948266">
        <id>O14901</id>
        <label>KLF11</label>
    </interactant>
    <organismsDiffer>false</organismsDiffer>
    <experiments>3</experiments>
</comment>
<comment type="interaction">
    <interactant intactId="EBI-21659356">
        <id>Q86U90</id>
    </interactant>
    <interactant intactId="EBI-2811583">
        <id>Q9BVL2</id>
        <label>NUP58</label>
    </interactant>
    <organismsDiffer>false</organismsDiffer>
    <experiments>3</experiments>
</comment>
<comment type="subcellular location">
    <subcellularLocation>
        <location evidence="6">Cytoplasm</location>
    </subcellularLocation>
    <subcellularLocation>
        <location evidence="6">Mitochondrion</location>
    </subcellularLocation>
    <subcellularLocation>
        <location evidence="1">Cell membrane</location>
        <topology evidence="1">Peripheral membrane protein</topology>
    </subcellularLocation>
    <text evidence="6">A large fraction localizes in the cytoplasm, whereas a smaller fraction is imported to mitochondria.</text>
</comment>
<comment type="tissue specificity">
    <text evidence="5">Ubiquitously expressed.</text>
</comment>
<comment type="domain">
    <text evidence="6">The mitochondrial targeting sequence (MTS) is weak and only mediates import of a small fraction of YRDC in mitochondria.</text>
</comment>
<comment type="disease" evidence="7 8">
    <disease id="DI-06184">
        <name>Galloway-Mowat syndrome 10</name>
        <acronym>GAMOS10</acronym>
        <description>A form of Galloway-Mowat syndrome, a severe renal-neurological disease characterized by early-onset nephrotic syndrome associated with microcephaly, central nervous system abnormalities, developmental delays, and a propensity for seizures. Brain anomalies include gyration defects ranging from lissencephaly to pachygyria and polymicrogyria, and cerebellar hypoplasia. Most patients show facial dysmorphism characterized by a small, narrow forehead, large/floppy ears, deep-set eyes, and micrognathia. Additional variable features are visual impairment and arachnodactyly. Most patients die in early childhood. GAMOS10 is an autosomal recessive form with fatal outcome. Patients manifest congenital hypothyroidism in addition to neurologic, renal and dysmorphic features.</description>
        <dbReference type="MIM" id="619609"/>
    </disease>
    <text>The disease is caused by variants affecting the gene represented in this entry.</text>
</comment>
<comment type="similarity">
    <text evidence="12">Belongs to the SUA5 family.</text>
</comment>
<comment type="sequence caution" evidence="12">
    <conflict type="erroneous initiation">
        <sequence resource="EMBL-CDS" id="AAH08984"/>
    </conflict>
</comment>
<comment type="sequence caution" evidence="12">
    <conflict type="erroneous initiation">
        <sequence resource="EMBL-CDS" id="AAP37053"/>
    </conflict>
</comment>
<comment type="sequence caution" evidence="12">
    <conflict type="erroneous initiation">
        <sequence resource="EMBL-CDS" id="AAP37054"/>
    </conflict>
</comment>
<comment type="sequence caution" evidence="12">
    <conflict type="erroneous initiation">
        <sequence resource="EMBL-CDS" id="BAB15668"/>
    </conflict>
</comment>
<feature type="transit peptide" description="Mitochondrion" evidence="2">
    <location>
        <begin position="1"/>
        <end position="55"/>
    </location>
</feature>
<feature type="chain" id="PRO_0000341402" description="Threonylcarbamoyl-AMP synthase">
    <location>
        <begin position="56"/>
        <end position="279"/>
    </location>
</feature>
<feature type="domain" description="YrdC-like" evidence="3">
    <location>
        <begin position="67"/>
        <end position="257"/>
    </location>
</feature>
<feature type="region of interest" description="Disordered" evidence="4">
    <location>
        <begin position="21"/>
        <end position="41"/>
    </location>
</feature>
<feature type="modified residue" description="Phosphoserine" evidence="15 16 17 18 19">
    <location>
        <position position="60"/>
    </location>
</feature>
<feature type="sequence variant" id="VAR_085771" description="In GAMOS10; slightly decreased formation of tRNA threonylcarbamoyladenosine modification; dbSNP:rs1646752498." evidence="7">
    <original>A</original>
    <variation>V</variation>
    <location>
        <position position="84"/>
    </location>
</feature>
<feature type="sequence variant" id="VAR_085772" description="In GAMOS10; decreased formation of tRNA threonylcarbamoyladenosine modification; dbSNP:rs2148390396." evidence="8">
    <original>I</original>
    <variation>T</variation>
    <location>
        <position position="221"/>
    </location>
</feature>
<feature type="sequence variant" id="VAR_085773" description="In GAMOS10; slightly decreased formation of tRNA threonylcarbamoyladenosine modification." evidence="7">
    <location>
        <position position="265"/>
    </location>
</feature>
<feature type="mutagenesis site" description="Improved mitochondrial targeting sequence (MTS), leading to increased import into mitochondria." evidence="6">
    <original>AAS</original>
    <variation>FAF</variation>
    <location>
        <begin position="15"/>
        <end position="17"/>
    </location>
</feature>
<feature type="mutagenesis site" description="Improved mitochondrial targeting sequence (MTS), leading to increased import into mitochondria." evidence="6">
    <original>S</original>
    <variation>F</variation>
    <location>
        <position position="17"/>
    </location>
</feature>
<sequence length="279" mass="29328">MSPARRCRGMRAAVAASVGLSEGPAGSRSGRLFRPPSPAPAAPGARLLRLPGSGAVQAASPERAGWTEALRAAVAELRAGAVVAVPTDTLYGLACAASCSAALRAVYRLKGRSEAKPLAVCLGRVADVYRYCRVRVPEGLLKDLLPGPVTLVMERSEELNKDLNPFTPLVGIRIPDHAFMQDLAQMFEGPLALTSANLSSQASSLNVEEFQDLWPQLSLVIDGGQIGDGQSPECRLGSTVVDLSVPGKFGIIRPGCALESTTAILQQKYGLLPSHASYL</sequence>
<evidence type="ECO:0000250" key="1">
    <source>
        <dbReference type="UniProtKB" id="Q3U5F4"/>
    </source>
</evidence>
<evidence type="ECO:0000255" key="2"/>
<evidence type="ECO:0000255" key="3">
    <source>
        <dbReference type="PROSITE-ProRule" id="PRU00518"/>
    </source>
</evidence>
<evidence type="ECO:0000256" key="4">
    <source>
        <dbReference type="SAM" id="MobiDB-lite"/>
    </source>
</evidence>
<evidence type="ECO:0000269" key="5">
    <source>
    </source>
</evidence>
<evidence type="ECO:0000269" key="6">
    <source>
    </source>
</evidence>
<evidence type="ECO:0000269" key="7">
    <source>
    </source>
</evidence>
<evidence type="ECO:0000269" key="8">
    <source>
    </source>
</evidence>
<evidence type="ECO:0000303" key="9">
    <source>
    </source>
</evidence>
<evidence type="ECO:0000303" key="10">
    <source>
    </source>
</evidence>
<evidence type="ECO:0000303" key="11">
    <source ref="6"/>
</evidence>
<evidence type="ECO:0000305" key="12"/>
<evidence type="ECO:0000305" key="13">
    <source>
    </source>
</evidence>
<evidence type="ECO:0000312" key="14">
    <source>
        <dbReference type="HGNC" id="HGNC:28905"/>
    </source>
</evidence>
<evidence type="ECO:0007744" key="15">
    <source>
    </source>
</evidence>
<evidence type="ECO:0007744" key="16">
    <source>
    </source>
</evidence>
<evidence type="ECO:0007744" key="17">
    <source>
    </source>
</evidence>
<evidence type="ECO:0007744" key="18">
    <source>
    </source>
</evidence>
<evidence type="ECO:0007744" key="19">
    <source>
    </source>
</evidence>
<protein>
    <recommendedName>
        <fullName evidence="12">Threonylcarbamoyl-AMP synthase</fullName>
        <ecNumber evidence="13">2.7.7.87</ecNumber>
    </recommendedName>
    <alternativeName>
        <fullName evidence="11">Dopamine receptor-interacting protein 3</fullName>
    </alternativeName>
    <alternativeName>
        <fullName evidence="10">Ischemia/reperfusion-inducible protein homolog</fullName>
        <shortName evidence="10">hIRIP</shortName>
    </alternativeName>
</protein>
<dbReference type="EC" id="2.7.7.87" evidence="13"/>
<dbReference type="EMBL" id="AY172561">
    <property type="protein sequence ID" value="AAO41711.1"/>
    <property type="molecule type" value="mRNA"/>
</dbReference>
<dbReference type="EMBL" id="AL929472">
    <property type="status" value="NOT_ANNOTATED_CDS"/>
    <property type="molecule type" value="Genomic_DNA"/>
</dbReference>
<dbReference type="EMBL" id="CH471059">
    <property type="protein sequence ID" value="EAX07317.1"/>
    <property type="molecule type" value="Genomic_DNA"/>
</dbReference>
<dbReference type="EMBL" id="BC008984">
    <property type="protein sequence ID" value="AAH08984.3"/>
    <property type="status" value="ALT_INIT"/>
    <property type="molecule type" value="mRNA"/>
</dbReference>
<dbReference type="EMBL" id="BC067857">
    <property type="protein sequence ID" value="AAH67857.2"/>
    <property type="molecule type" value="mRNA"/>
</dbReference>
<dbReference type="EMBL" id="BC068057">
    <property type="protein sequence ID" value="AAH68057.1"/>
    <property type="molecule type" value="mRNA"/>
</dbReference>
<dbReference type="EMBL" id="BC080186">
    <property type="protein sequence ID" value="AAH80186.2"/>
    <property type="molecule type" value="mRNA"/>
</dbReference>
<dbReference type="EMBL" id="AY286019">
    <property type="protein sequence ID" value="AAP37053.1"/>
    <property type="status" value="ALT_INIT"/>
    <property type="molecule type" value="mRNA"/>
</dbReference>
<dbReference type="EMBL" id="AY286020">
    <property type="protein sequence ID" value="AAP37054.1"/>
    <property type="status" value="ALT_INIT"/>
    <property type="molecule type" value="mRNA"/>
</dbReference>
<dbReference type="EMBL" id="AF250397">
    <property type="protein sequence ID" value="AAQ14263.1"/>
    <property type="molecule type" value="mRNA"/>
</dbReference>
<dbReference type="EMBL" id="AK027129">
    <property type="protein sequence ID" value="BAB15668.1"/>
    <property type="status" value="ALT_INIT"/>
    <property type="molecule type" value="mRNA"/>
</dbReference>
<dbReference type="CCDS" id="CCDS30675.1"/>
<dbReference type="RefSeq" id="NP_078916.3">
    <property type="nucleotide sequence ID" value="NM_024640.3"/>
</dbReference>
<dbReference type="SMR" id="Q86U90"/>
<dbReference type="BioGRID" id="122814">
    <property type="interactions" value="28"/>
</dbReference>
<dbReference type="FunCoup" id="Q86U90">
    <property type="interactions" value="1235"/>
</dbReference>
<dbReference type="IntAct" id="Q86U90">
    <property type="interactions" value="12"/>
</dbReference>
<dbReference type="STRING" id="9606.ENSP00000362135"/>
<dbReference type="GlyCosmos" id="Q86U90">
    <property type="glycosylation" value="1 site, 2 glycans"/>
</dbReference>
<dbReference type="GlyGen" id="Q86U90">
    <property type="glycosylation" value="3 sites, 2 O-linked glycans (3 sites)"/>
</dbReference>
<dbReference type="iPTMnet" id="Q86U90"/>
<dbReference type="PhosphoSitePlus" id="Q86U90"/>
<dbReference type="SwissPalm" id="Q86U90"/>
<dbReference type="BioMuta" id="YRDC"/>
<dbReference type="DMDM" id="74750410"/>
<dbReference type="jPOST" id="Q86U90"/>
<dbReference type="MassIVE" id="Q86U90"/>
<dbReference type="PaxDb" id="9606-ENSP00000362135"/>
<dbReference type="PeptideAtlas" id="Q86U90"/>
<dbReference type="ProteomicsDB" id="69783"/>
<dbReference type="Pumba" id="Q86U90"/>
<dbReference type="Antibodypedia" id="31792">
    <property type="antibodies" value="28 antibodies from 13 providers"/>
</dbReference>
<dbReference type="DNASU" id="79693"/>
<dbReference type="Ensembl" id="ENST00000373044.3">
    <property type="protein sequence ID" value="ENSP00000362135.2"/>
    <property type="gene ID" value="ENSG00000196449.4"/>
</dbReference>
<dbReference type="GeneID" id="79693"/>
<dbReference type="KEGG" id="hsa:79693"/>
<dbReference type="MANE-Select" id="ENST00000373044.3">
    <property type="protein sequence ID" value="ENSP00000362135.2"/>
    <property type="RefSeq nucleotide sequence ID" value="NM_024640.4"/>
    <property type="RefSeq protein sequence ID" value="NP_078916.3"/>
</dbReference>
<dbReference type="UCSC" id="uc001cca.2">
    <property type="organism name" value="human"/>
</dbReference>
<dbReference type="AGR" id="HGNC:28905"/>
<dbReference type="CTD" id="79693"/>
<dbReference type="DisGeNET" id="79693"/>
<dbReference type="GeneCards" id="YRDC"/>
<dbReference type="HGNC" id="HGNC:28905">
    <property type="gene designation" value="YRDC"/>
</dbReference>
<dbReference type="HPA" id="ENSG00000196449">
    <property type="expression patterns" value="Tissue enhanced (bone)"/>
</dbReference>
<dbReference type="MalaCards" id="YRDC"/>
<dbReference type="MIM" id="612276">
    <property type="type" value="gene"/>
</dbReference>
<dbReference type="MIM" id="619609">
    <property type="type" value="phenotype"/>
</dbReference>
<dbReference type="neXtProt" id="NX_Q86U90"/>
<dbReference type="OpenTargets" id="ENSG00000196449"/>
<dbReference type="Orphanet" id="2065">
    <property type="disease" value="Galloway-Mowat syndrome"/>
</dbReference>
<dbReference type="PharmGKB" id="PA142670553"/>
<dbReference type="VEuPathDB" id="HostDB:ENSG00000196449"/>
<dbReference type="eggNOG" id="KOG3051">
    <property type="taxonomic scope" value="Eukaryota"/>
</dbReference>
<dbReference type="GeneTree" id="ENSGT00390000015364"/>
<dbReference type="HOGENOM" id="CLU_031397_5_0_1"/>
<dbReference type="InParanoid" id="Q86U90"/>
<dbReference type="OMA" id="RDLCAVW"/>
<dbReference type="OrthoDB" id="3648309at2759"/>
<dbReference type="PAN-GO" id="Q86U90">
    <property type="GO annotations" value="4 GO annotations based on evolutionary models"/>
</dbReference>
<dbReference type="PhylomeDB" id="Q86U90"/>
<dbReference type="TreeFam" id="TF314358"/>
<dbReference type="PathwayCommons" id="Q86U90"/>
<dbReference type="SignaLink" id="Q86U90"/>
<dbReference type="BioGRID-ORCS" id="79693">
    <property type="hits" value="734 hits in 1155 CRISPR screens"/>
</dbReference>
<dbReference type="ChiTaRS" id="YRDC">
    <property type="organism name" value="human"/>
</dbReference>
<dbReference type="GenomeRNAi" id="79693"/>
<dbReference type="Pharos" id="Q86U90">
    <property type="development level" value="Tdark"/>
</dbReference>
<dbReference type="PRO" id="PR:Q86U90"/>
<dbReference type="Proteomes" id="UP000005640">
    <property type="component" value="Chromosome 1"/>
</dbReference>
<dbReference type="RNAct" id="Q86U90">
    <property type="molecule type" value="protein"/>
</dbReference>
<dbReference type="Bgee" id="ENSG00000196449">
    <property type="expression patterns" value="Expressed in gingival epithelium and 171 other cell types or tissues"/>
</dbReference>
<dbReference type="GO" id="GO:0005737">
    <property type="term" value="C:cytoplasm"/>
    <property type="evidence" value="ECO:0000314"/>
    <property type="project" value="UniProtKB"/>
</dbReference>
<dbReference type="GO" id="GO:0005739">
    <property type="term" value="C:mitochondrion"/>
    <property type="evidence" value="ECO:0000314"/>
    <property type="project" value="UniProtKB"/>
</dbReference>
<dbReference type="GO" id="GO:0005886">
    <property type="term" value="C:plasma membrane"/>
    <property type="evidence" value="ECO:0007669"/>
    <property type="project" value="UniProtKB-SubCell"/>
</dbReference>
<dbReference type="GO" id="GO:0003725">
    <property type="term" value="F:double-stranded RNA binding"/>
    <property type="evidence" value="ECO:0007669"/>
    <property type="project" value="InterPro"/>
</dbReference>
<dbReference type="GO" id="GO:0061710">
    <property type="term" value="F:L-threonylcarbamoyladenylate synthase"/>
    <property type="evidence" value="ECO:0000314"/>
    <property type="project" value="UniProtKB"/>
</dbReference>
<dbReference type="GO" id="GO:0016779">
    <property type="term" value="F:nucleotidyltransferase activity"/>
    <property type="evidence" value="ECO:0000318"/>
    <property type="project" value="GO_Central"/>
</dbReference>
<dbReference type="GO" id="GO:0000049">
    <property type="term" value="F:tRNA binding"/>
    <property type="evidence" value="ECO:0000318"/>
    <property type="project" value="GO_Central"/>
</dbReference>
<dbReference type="GO" id="GO:0051051">
    <property type="term" value="P:negative regulation of transport"/>
    <property type="evidence" value="ECO:0000314"/>
    <property type="project" value="MGI"/>
</dbReference>
<dbReference type="GO" id="GO:0006450">
    <property type="term" value="P:regulation of translational fidelity"/>
    <property type="evidence" value="ECO:0000318"/>
    <property type="project" value="GO_Central"/>
</dbReference>
<dbReference type="GO" id="GO:0002949">
    <property type="term" value="P:tRNA threonylcarbamoyladenosine modification"/>
    <property type="evidence" value="ECO:0000314"/>
    <property type="project" value="UniProtKB"/>
</dbReference>
<dbReference type="FunFam" id="3.90.870.10:FF:000007">
    <property type="entry name" value="YrdC N6-threonylcarbamoyltransferase domain containing"/>
    <property type="match status" value="1"/>
</dbReference>
<dbReference type="Gene3D" id="3.90.870.10">
    <property type="entry name" value="DHBP synthase"/>
    <property type="match status" value="1"/>
</dbReference>
<dbReference type="InterPro" id="IPR017945">
    <property type="entry name" value="DHBP_synth_RibB-like_a/b_dom"/>
</dbReference>
<dbReference type="InterPro" id="IPR006070">
    <property type="entry name" value="Sua5-like_dom"/>
</dbReference>
<dbReference type="InterPro" id="IPR050156">
    <property type="entry name" value="TC-AMP_synthase_SUA5"/>
</dbReference>
<dbReference type="NCBIfam" id="TIGR00057">
    <property type="entry name" value="L-threonylcarbamoyladenylate synthase"/>
    <property type="match status" value="1"/>
</dbReference>
<dbReference type="PANTHER" id="PTHR17490">
    <property type="entry name" value="SUA5"/>
    <property type="match status" value="1"/>
</dbReference>
<dbReference type="PANTHER" id="PTHR17490:SF10">
    <property type="entry name" value="THREONYLCARBAMOYL-AMP SYNTHASE"/>
    <property type="match status" value="1"/>
</dbReference>
<dbReference type="Pfam" id="PF01300">
    <property type="entry name" value="Sua5_yciO_yrdC"/>
    <property type="match status" value="1"/>
</dbReference>
<dbReference type="SUPFAM" id="SSF55821">
    <property type="entry name" value="YrdC/RibB"/>
    <property type="match status" value="1"/>
</dbReference>
<dbReference type="PROSITE" id="PS51163">
    <property type="entry name" value="YRDC"/>
    <property type="match status" value="1"/>
</dbReference>
<accession>Q86U90</accession>
<accession>Q4W4X8</accession>
<accession>Q6NVW3</accession>
<accession>Q7L4E4</accession>
<accession>Q7Z2I4</accession>
<accession>Q9H5F8</accession>
<gene>
    <name evidence="9 14" type="primary">YRDC</name>
    <name evidence="11" type="synonym">DRIP3</name>
    <name evidence="10" type="synonym">IRIP</name>
</gene>
<organism>
    <name type="scientific">Homo sapiens</name>
    <name type="common">Human</name>
    <dbReference type="NCBI Taxonomy" id="9606"/>
    <lineage>
        <taxon>Eukaryota</taxon>
        <taxon>Metazoa</taxon>
        <taxon>Chordata</taxon>
        <taxon>Craniata</taxon>
        <taxon>Vertebrata</taxon>
        <taxon>Euteleostomi</taxon>
        <taxon>Mammalia</taxon>
        <taxon>Eutheria</taxon>
        <taxon>Euarchontoglires</taxon>
        <taxon>Primates</taxon>
        <taxon>Haplorrhini</taxon>
        <taxon>Catarrhini</taxon>
        <taxon>Hominidae</taxon>
        <taxon>Homo</taxon>
    </lineage>
</organism>